<evidence type="ECO:0000255" key="1">
    <source>
        <dbReference type="HAMAP-Rule" id="MF_00196"/>
    </source>
</evidence>
<dbReference type="EC" id="1.1.1.17" evidence="1"/>
<dbReference type="EMBL" id="CP000886">
    <property type="protein sequence ID" value="ABX69892.1"/>
    <property type="molecule type" value="Genomic_DNA"/>
</dbReference>
<dbReference type="RefSeq" id="WP_000645391.1">
    <property type="nucleotide sequence ID" value="NC_010102.1"/>
</dbReference>
<dbReference type="SMR" id="A9MVI4"/>
<dbReference type="KEGG" id="spq:SPAB_04579"/>
<dbReference type="PATRIC" id="fig|1016998.12.peg.4305"/>
<dbReference type="HOGENOM" id="CLU_036089_2_0_6"/>
<dbReference type="BioCyc" id="SENT1016998:SPAB_RS18625-MONOMER"/>
<dbReference type="Proteomes" id="UP000008556">
    <property type="component" value="Chromosome"/>
</dbReference>
<dbReference type="GO" id="GO:0005829">
    <property type="term" value="C:cytosol"/>
    <property type="evidence" value="ECO:0007669"/>
    <property type="project" value="TreeGrafter"/>
</dbReference>
<dbReference type="GO" id="GO:0008926">
    <property type="term" value="F:mannitol-1-phosphate 5-dehydrogenase activity"/>
    <property type="evidence" value="ECO:0007669"/>
    <property type="project" value="UniProtKB-UniRule"/>
</dbReference>
<dbReference type="GO" id="GO:0019592">
    <property type="term" value="P:mannitol catabolic process"/>
    <property type="evidence" value="ECO:0007669"/>
    <property type="project" value="TreeGrafter"/>
</dbReference>
<dbReference type="FunFam" id="1.10.1040.10:FF:000009">
    <property type="entry name" value="Mannitol-1-phosphate 5-dehydrogenase"/>
    <property type="match status" value="1"/>
</dbReference>
<dbReference type="FunFam" id="3.40.50.720:FF:000075">
    <property type="entry name" value="Mannitol-1-phosphate 5-dehydrogenase"/>
    <property type="match status" value="1"/>
</dbReference>
<dbReference type="Gene3D" id="1.10.1040.10">
    <property type="entry name" value="N-(1-d-carboxylethyl)-l-norvaline Dehydrogenase, domain 2"/>
    <property type="match status" value="1"/>
</dbReference>
<dbReference type="Gene3D" id="3.40.50.720">
    <property type="entry name" value="NAD(P)-binding Rossmann-like Domain"/>
    <property type="match status" value="1"/>
</dbReference>
<dbReference type="HAMAP" id="MF_00196">
    <property type="entry name" value="Mannitol_dehydrog"/>
    <property type="match status" value="1"/>
</dbReference>
<dbReference type="InterPro" id="IPR008927">
    <property type="entry name" value="6-PGluconate_DH-like_C_sf"/>
</dbReference>
<dbReference type="InterPro" id="IPR013328">
    <property type="entry name" value="6PGD_dom2"/>
</dbReference>
<dbReference type="InterPro" id="IPR023028">
    <property type="entry name" value="Mannitol_1_phos_5_DH"/>
</dbReference>
<dbReference type="InterPro" id="IPR000669">
    <property type="entry name" value="Mannitol_DH"/>
</dbReference>
<dbReference type="InterPro" id="IPR013118">
    <property type="entry name" value="Mannitol_DH_C"/>
</dbReference>
<dbReference type="InterPro" id="IPR023027">
    <property type="entry name" value="Mannitol_DH_CS"/>
</dbReference>
<dbReference type="InterPro" id="IPR013131">
    <property type="entry name" value="Mannitol_DH_N"/>
</dbReference>
<dbReference type="InterPro" id="IPR036291">
    <property type="entry name" value="NAD(P)-bd_dom_sf"/>
</dbReference>
<dbReference type="NCBIfam" id="NF002646">
    <property type="entry name" value="PRK02318.1-2"/>
    <property type="match status" value="1"/>
</dbReference>
<dbReference type="NCBIfam" id="NF002647">
    <property type="entry name" value="PRK02318.1-3"/>
    <property type="match status" value="1"/>
</dbReference>
<dbReference type="NCBIfam" id="NF002648">
    <property type="entry name" value="PRK02318.1-4"/>
    <property type="match status" value="1"/>
</dbReference>
<dbReference type="NCBIfam" id="NF002650">
    <property type="entry name" value="PRK02318.2-2"/>
    <property type="match status" value="1"/>
</dbReference>
<dbReference type="NCBIfam" id="NF002652">
    <property type="entry name" value="PRK02318.2-5"/>
    <property type="match status" value="1"/>
</dbReference>
<dbReference type="PANTHER" id="PTHR30524:SF0">
    <property type="entry name" value="ALTRONATE OXIDOREDUCTASE-RELATED"/>
    <property type="match status" value="1"/>
</dbReference>
<dbReference type="PANTHER" id="PTHR30524">
    <property type="entry name" value="MANNITOL-1-PHOSPHATE 5-DEHYDROGENASE"/>
    <property type="match status" value="1"/>
</dbReference>
<dbReference type="Pfam" id="PF01232">
    <property type="entry name" value="Mannitol_dh"/>
    <property type="match status" value="1"/>
</dbReference>
<dbReference type="Pfam" id="PF08125">
    <property type="entry name" value="Mannitol_dh_C"/>
    <property type="match status" value="1"/>
</dbReference>
<dbReference type="PRINTS" id="PR00084">
    <property type="entry name" value="MTLDHDRGNASE"/>
</dbReference>
<dbReference type="SUPFAM" id="SSF48179">
    <property type="entry name" value="6-phosphogluconate dehydrogenase C-terminal domain-like"/>
    <property type="match status" value="1"/>
</dbReference>
<dbReference type="SUPFAM" id="SSF51735">
    <property type="entry name" value="NAD(P)-binding Rossmann-fold domains"/>
    <property type="match status" value="1"/>
</dbReference>
<dbReference type="PROSITE" id="PS00974">
    <property type="entry name" value="MANNITOL_DHGENASE"/>
    <property type="match status" value="1"/>
</dbReference>
<reference key="1">
    <citation type="submission" date="2007-11" db="EMBL/GenBank/DDBJ databases">
        <authorList>
            <consortium name="The Salmonella enterica serovar Paratyphi B Genome Sequencing Project"/>
            <person name="McClelland M."/>
            <person name="Sanderson E.K."/>
            <person name="Porwollik S."/>
            <person name="Spieth J."/>
            <person name="Clifton W.S."/>
            <person name="Fulton R."/>
            <person name="Cordes M."/>
            <person name="Wollam A."/>
            <person name="Shah N."/>
            <person name="Pepin K."/>
            <person name="Bhonagiri V."/>
            <person name="Nash W."/>
            <person name="Johnson M."/>
            <person name="Thiruvilangam P."/>
            <person name="Wilson R."/>
        </authorList>
    </citation>
    <scope>NUCLEOTIDE SEQUENCE [LARGE SCALE GENOMIC DNA]</scope>
    <source>
        <strain>ATCC BAA-1250 / SPB7</strain>
    </source>
</reference>
<feature type="chain" id="PRO_1000077683" description="Mannitol-1-phosphate 5-dehydrogenase">
    <location>
        <begin position="1"/>
        <end position="382"/>
    </location>
</feature>
<feature type="binding site" evidence="1">
    <location>
        <begin position="3"/>
        <end position="14"/>
    </location>
    <ligand>
        <name>NAD(+)</name>
        <dbReference type="ChEBI" id="CHEBI:57540"/>
    </ligand>
</feature>
<proteinExistence type="inferred from homology"/>
<name>MTLD_SALPB</name>
<keyword id="KW-0520">NAD</keyword>
<keyword id="KW-0560">Oxidoreductase</keyword>
<protein>
    <recommendedName>
        <fullName evidence="1">Mannitol-1-phosphate 5-dehydrogenase</fullName>
        <ecNumber evidence="1">1.1.1.17</ecNumber>
    </recommendedName>
</protein>
<sequence>MKALHFGAGNIGRGFIGKLLADAGIQLTFADVNQVVLDALNARHSYQVHVVGENEQVDTVSGVNAVSSIGDDVVDLIAHVDLITTAVGPVVLERIAPAIAKGLVKRKAQGVDAPLNIIACENMVRGTTQLKGHVMNALADGDKAWVEQHVGFVDSAVDRIVPPSASATNDPLEVTVETFSEWIVDKTQFKGALPNIPGMELTDNLMAFVERKLFTLNTGHAITAYLGKLAGHQTIRDAILDESIRAVVKGAMEESGAVLIKRYGFDADKHAAYIQKILGRFENPYLKDDVERVGRQPLRKLSAGDRLIKPLLGTLEYGLPHVNLVKGIAAAMHFRSDEDPQAQELAALITEKGPQAALAQISGLDANSDVVAEAVNAYNATK</sequence>
<accession>A9MVI4</accession>
<organism>
    <name type="scientific">Salmonella paratyphi B (strain ATCC BAA-1250 / SPB7)</name>
    <dbReference type="NCBI Taxonomy" id="1016998"/>
    <lineage>
        <taxon>Bacteria</taxon>
        <taxon>Pseudomonadati</taxon>
        <taxon>Pseudomonadota</taxon>
        <taxon>Gammaproteobacteria</taxon>
        <taxon>Enterobacterales</taxon>
        <taxon>Enterobacteriaceae</taxon>
        <taxon>Salmonella</taxon>
    </lineage>
</organism>
<comment type="catalytic activity">
    <reaction evidence="1">
        <text>D-mannitol 1-phosphate + NAD(+) = beta-D-fructose 6-phosphate + NADH + H(+)</text>
        <dbReference type="Rhea" id="RHEA:19661"/>
        <dbReference type="ChEBI" id="CHEBI:15378"/>
        <dbReference type="ChEBI" id="CHEBI:57540"/>
        <dbReference type="ChEBI" id="CHEBI:57634"/>
        <dbReference type="ChEBI" id="CHEBI:57945"/>
        <dbReference type="ChEBI" id="CHEBI:61381"/>
        <dbReference type="EC" id="1.1.1.17"/>
    </reaction>
</comment>
<comment type="similarity">
    <text evidence="1">Belongs to the mannitol dehydrogenase family.</text>
</comment>
<gene>
    <name evidence="1" type="primary">mtlD</name>
    <name type="ordered locus">SPAB_04579</name>
</gene>